<protein>
    <recommendedName>
        <fullName>Protein PRRC2C</fullName>
    </recommendedName>
    <alternativeName>
        <fullName>BAT2 domain-containing protein 1</fullName>
    </alternativeName>
    <alternativeName>
        <fullName>HBV X-transactivated gene 2 protein</fullName>
    </alternativeName>
    <alternativeName>
        <fullName>HBV XAg-transactivated protein 2</fullName>
    </alternativeName>
    <alternativeName>
        <fullName>HLA-B-associated transcript 2-like 2</fullName>
    </alternativeName>
    <alternativeName>
        <fullName>Proline-rich and coiled-coil-containing protein 2C</fullName>
    </alternativeName>
</protein>
<sequence length="2896" mass="316911">MSEKSGQSTKAKDGKKYATLSLFNTYKGKSLETQKTTARHGLQSLGKVGISRRMPPPANLPSLKAENKGNDPNVNIVPKDGTGWASKQEQHEEEKTPEVPPAQPKPGVAAPPEVAPAPKSWASNKQGGQGDGIQVNSQFQQEFPSLQAAGDQEKKEKETNDDNYGPGPSLRPPNVACWRDGGKAAGSPSSSDQDEKLPGQDESTAGTSEQNDILKVVEKRIACGPPQAKLNGQQAALASQYRAMMPPYMFQQYPRMTYPPLHGPMRFPPSLSETNKGLRGRGPPPSWASEPERPSILSASELKELDKFDNLDAEADEGWAGAQMEVDYTEQLNFSDDDEQGSNSPKENNSEDQGSKASENNENKKETDEVSNTKSSSQIPAQPSVAKVPYGKGPSFNQERGTSSHLPPPPKLLAQQHPPPDRQAVPGRPGPFPSKQQVADEDEIWKQRRRQQSEISAAVERARKRREEEERRMEEQRKAACAEKLKRLDEKLGILEKQPSPEEIREREREKEREREKELEKEQEQEREKEREKDRERQQEKEKELEKEQEKQREMEKERKQEKEKELERQKEKEKELQKMKEQEKECELEKEREKLEEKIEPREPNLEPMVEKQESENSCNKEEEPVFTRQDSNRSEKEATPVVHETEPESGSQPRPAVLSGYFKQFQKSLPPRFQRQQEQMKQQQWQQQQQQGVLPQTVPSQPSSSTVPPPPHRPLYQPMQPHPQHLASMGFDPRWLMMQSYMDPRMMSGRPAMDIPPIHPGMIPPKPLMRRDQMEGSPNSSESFEHIARSARDHAISLSEPRMLWGSDPYPHAEPQQATTPKATEEPEDVRSEAALDQEQITAAYSVEHNQLEAHPKADFIRESSEAQVQKFLSRSVEDVRPHHTDANNQSACFEAPDQKTLSAPQEERISAVESQPSRKRSVSHGSNHTQKPDEQRSEPSAGIPKVTSRCIDSKEPIERPEEKPKKEGFIRSSEGPKPEKVYKSKSETRWGPRPSSNRREEVNDRPVRRSGPIKKPVLRDMKEEREQRKEKEGEKAEKVTEKVVVKPEKTEKKDLPPPPPPPQPPAPIQPQSVPPPIQPEAEKFPSTETATLAQKPSQDTEKPLEPVSTVQVEPAVKTVNQQTMAAPVVKEEKQPEKVISKDLVIERPRPDSRPAVKKESTLPPRTYWKEARERDWFPDQGYRGRGRGEYYSRGRSYRGSYGGRGRGGRGHTRDYPQYRDNKPRAEHIPSGPLRQREESETRSESSDFEVVPKRRRQRGSETDTDSEIHESASDKDSLSKGKLPKREERPENKKPVKPHSSFKPDNHVRIDNRLLEKPYVRDDDKAKPGFLPKGEPTRRGRGGTFRRGGRDPGGRPSRPSTLRRPAYRDNQWNPRQSEVPKPEDGEPPRRHEQFIPIAADKRPPKFERKFDPARERPRRQRPTRPPRQDKPPRFRRLREREAASKSNEVVAVPTNGTVNNVAQEPVNTLGDISGNKTPDLSNQNSSDQANEEWETASESSDFNERRERDEKKNADLNAQTVVKVGENVLPPKREIAKRSFSSQRPVDRQNRRGNNGPPKSGRNFSGPRNERRSGPPSKSGKRGPFDDQPAGTTGVDLINGSSAHHQEGVPNGTGQKNSKDSTGKKREDPKPGPKKPKEKVDALSQFDLNNYASVVIIDDHPEVTVIEDPQSNLNDDGFTEVVSKKQQKRLQDEERRKKEEQVIQVWNKKNANEKGRSQTSKLPPRFAKKQATGIQQAQSSASVPPLASAPLPPSTSASVPASTSAPLPATLTPVPASTSAPVPASTLAPVLASTSAPVPASPLAPVSASASVSASVPASTSAAAITSSSAPASAPAPTPILASVSTPASVTILASASIPILASALASTSAPTPAPAASSPAAPVITAPTIPASAPTASVPLAPASASAPAPAPTPVSAPNPAPPAPAQTQAQTHKPVQNPLQTTSQSSKQPPPSIRLPSAQTPNGTDYVASGKSIQTPQSHGTLTAELWDNKVAPPAVLNDISKKLGPISPPQPPSVSAWNKPLTSFGSAPSSEGAKNGQESGLEIGTDTIQFGAPASNGNENEVVPVLSEKSADKIPEPKEQRQKQPRAGPIKAQKLPDLSPVENKEHKPGPIGKERSLKNRKVKDAQQVEPEGQEKPSPATVRSTDPVTTKETKAVSEMSTEIGTMISVSSAEYGTNAKESVTDYTTPSSSLPNTVATNNTKMEDTLVNNVPLPNTLPLPKRETIQQSSSLTSVPPTTFSLTFKMESARKAWENSPNVREKGSPVTSTAPPIATGVSSSASGPSTANYNSFSSASMPQIPVASVTPTASLSGAGTYTTSSLSTKSTTTSDPPNICKVKPQQLQTSSLPSASHFSQLSCMPSLIAQQQQNPQVYVSQSAAAQIPAFYMDTSHLFNTQHARLAPPSLAQQQGFQPGLSQPTSVQQIPIPIYAPLQGQHQAQLSLGAGPAVSQAQELFSSSLQPYRSQPAFMQSSLSQPSVVLSGTAIHNFPTVQHQELAKAQSGLAFQQTSNTQPIPILYEHQLGQASGLGGSQLIDTHLLQARANLTQASNLYSGQVQQPGQTNFYNTAQSPSALQQVTVPLPASQLSLPNFGSTGQPLIALPQTLQPPLQHTTPQAQAQSLSRPAQVSQPFRGLIPAGTQHSMIATTGKMSEMELKAFGSGIDIKPGTPPIAGRSTTPTSSPFRATSTSPNSQSSKMNSIVYQKQFQSAPATVRMTQPFPTQFAPQILSQPNLVPPLVRAPHTNTFPAPVQRPPMALASQMPPPLTTGLMSHARLPHVARGPCGSLSGVRGNQAQAALKAEQDMKAKQRAEVLQSTQRFFSEQQQSKQIGGGKAQKVDSDSSKPPETLTDPPGVCQEKVEEKPPPAPSIATKPVRTGPIKPQAIKTEETKS</sequence>
<organism>
    <name type="scientific">Homo sapiens</name>
    <name type="common">Human</name>
    <dbReference type="NCBI Taxonomy" id="9606"/>
    <lineage>
        <taxon>Eukaryota</taxon>
        <taxon>Metazoa</taxon>
        <taxon>Chordata</taxon>
        <taxon>Craniata</taxon>
        <taxon>Vertebrata</taxon>
        <taxon>Euteleostomi</taxon>
        <taxon>Mammalia</taxon>
        <taxon>Eutheria</taxon>
        <taxon>Euarchontoglires</taxon>
        <taxon>Primates</taxon>
        <taxon>Haplorrhini</taxon>
        <taxon>Catarrhini</taxon>
        <taxon>Hominidae</taxon>
        <taxon>Homo</taxon>
    </lineage>
</organism>
<dbReference type="EMBL" id="AF488829">
    <property type="protein sequence ID" value="AAO49478.1"/>
    <property type="molecule type" value="mRNA"/>
</dbReference>
<dbReference type="EMBL" id="AL096857">
    <property type="protein sequence ID" value="CAB51071.1"/>
    <property type="molecule type" value="mRNA"/>
</dbReference>
<dbReference type="EMBL" id="AL021579">
    <property type="status" value="NOT_ANNOTATED_CDS"/>
    <property type="molecule type" value="Genomic_DNA"/>
</dbReference>
<dbReference type="EMBL" id="Z98750">
    <property type="status" value="NOT_ANNOTATED_CDS"/>
    <property type="molecule type" value="Genomic_DNA"/>
</dbReference>
<dbReference type="EMBL" id="AF253978">
    <property type="protein sequence ID" value="AAG44627.1"/>
    <property type="molecule type" value="mRNA"/>
</dbReference>
<dbReference type="EMBL" id="BC006090">
    <property type="protein sequence ID" value="AAH06090.1"/>
    <property type="status" value="ALT_SEQ"/>
    <property type="molecule type" value="mRNA"/>
</dbReference>
<dbReference type="EMBL" id="BC045713">
    <property type="protein sequence ID" value="AAH45713.1"/>
    <property type="status" value="ALT_SEQ"/>
    <property type="molecule type" value="mRNA"/>
</dbReference>
<dbReference type="EMBL" id="BC058930">
    <property type="protein sequence ID" value="AAH58930.1"/>
    <property type="status" value="ALT_SEQ"/>
    <property type="molecule type" value="mRNA"/>
</dbReference>
<dbReference type="EMBL" id="AB029019">
    <property type="protein sequence ID" value="BAA83048.2"/>
    <property type="molecule type" value="mRNA"/>
</dbReference>
<dbReference type="EMBL" id="AL133635">
    <property type="protein sequence ID" value="CAB63759.1"/>
    <property type="molecule type" value="mRNA"/>
</dbReference>
<dbReference type="EMBL" id="AL162004">
    <property type="protein sequence ID" value="CAB82345.1"/>
    <property type="molecule type" value="mRNA"/>
</dbReference>
<dbReference type="EMBL" id="AK000190">
    <property type="protein sequence ID" value="BAA90997.1"/>
    <property type="status" value="ALT_SEQ"/>
    <property type="molecule type" value="mRNA"/>
</dbReference>
<dbReference type="EMBL" id="AK022492">
    <property type="protein sequence ID" value="BAB14056.1"/>
    <property type="molecule type" value="mRNA"/>
</dbReference>
<dbReference type="CCDS" id="CCDS1296.2">
    <molecule id="Q9Y520-4"/>
</dbReference>
<dbReference type="CCDS" id="CCDS91104.1">
    <molecule id="Q9Y520-7"/>
</dbReference>
<dbReference type="PIR" id="T43454">
    <property type="entry name" value="T43454"/>
</dbReference>
<dbReference type="PIR" id="T47182">
    <property type="entry name" value="T47182"/>
</dbReference>
<dbReference type="RefSeq" id="NP_001374773.1">
    <molecule id="Q9Y520-7"/>
    <property type="nucleotide sequence ID" value="NM_001387844.1"/>
</dbReference>
<dbReference type="RefSeq" id="NP_055987.2">
    <molecule id="Q9Y520-4"/>
    <property type="nucleotide sequence ID" value="NM_015172.4"/>
</dbReference>
<dbReference type="RefSeq" id="XP_005245074.1">
    <property type="nucleotide sequence ID" value="XM_005245017.2"/>
</dbReference>
<dbReference type="RefSeq" id="XP_006711301.1">
    <molecule id="Q9Y520-1"/>
    <property type="nucleotide sequence ID" value="XM_006711238.5"/>
</dbReference>
<dbReference type="RefSeq" id="XP_054191356.1">
    <molecule id="Q9Y520-1"/>
    <property type="nucleotide sequence ID" value="XM_054335381.1"/>
</dbReference>
<dbReference type="SMR" id="Q9Y520"/>
<dbReference type="BioGRID" id="116822">
    <property type="interactions" value="296"/>
</dbReference>
<dbReference type="DIP" id="DIP-47285N"/>
<dbReference type="FunCoup" id="Q9Y520">
    <property type="interactions" value="2519"/>
</dbReference>
<dbReference type="IntAct" id="Q9Y520">
    <property type="interactions" value="129"/>
</dbReference>
<dbReference type="MINT" id="Q9Y520"/>
<dbReference type="STRING" id="9606.ENSP00000343629"/>
<dbReference type="GlyConnect" id="2856">
    <property type="glycosylation" value="1 O-GlcNAc glycan (2 sites)"/>
</dbReference>
<dbReference type="GlyCosmos" id="Q9Y520">
    <property type="glycosylation" value="68 sites, 2 glycans"/>
</dbReference>
<dbReference type="GlyGen" id="Q9Y520">
    <property type="glycosylation" value="92 sites, 3 O-linked glycans (87 sites)"/>
</dbReference>
<dbReference type="iPTMnet" id="Q9Y520"/>
<dbReference type="MetOSite" id="Q9Y520"/>
<dbReference type="PhosphoSitePlus" id="Q9Y520"/>
<dbReference type="SwissPalm" id="Q9Y520"/>
<dbReference type="BioMuta" id="PRRC2C"/>
<dbReference type="DMDM" id="341942262"/>
<dbReference type="jPOST" id="Q9Y520"/>
<dbReference type="MassIVE" id="Q9Y520"/>
<dbReference type="PaxDb" id="9606-ENSP00000343629"/>
<dbReference type="PeptideAtlas" id="Q9Y520"/>
<dbReference type="ProteomicsDB" id="86273">
    <molecule id="Q9Y520-1"/>
</dbReference>
<dbReference type="ProteomicsDB" id="86274">
    <molecule id="Q9Y520-2"/>
</dbReference>
<dbReference type="ProteomicsDB" id="86275">
    <molecule id="Q9Y520-3"/>
</dbReference>
<dbReference type="ProteomicsDB" id="86276">
    <molecule id="Q9Y520-4"/>
</dbReference>
<dbReference type="ProteomicsDB" id="86277">
    <molecule id="Q9Y520-5"/>
</dbReference>
<dbReference type="ProteomicsDB" id="86278">
    <molecule id="Q9Y520-6"/>
</dbReference>
<dbReference type="ProteomicsDB" id="86279">
    <molecule id="Q9Y520-7"/>
</dbReference>
<dbReference type="Pumba" id="Q9Y520"/>
<dbReference type="Antibodypedia" id="20552">
    <property type="antibodies" value="28 antibodies from 10 providers"/>
</dbReference>
<dbReference type="DNASU" id="23215"/>
<dbReference type="Ensembl" id="ENST00000338920.8">
    <molecule id="Q9Y520-4"/>
    <property type="protein sequence ID" value="ENSP00000343629.4"/>
    <property type="gene ID" value="ENSG00000117523.18"/>
</dbReference>
<dbReference type="Ensembl" id="ENST00000426496.6">
    <molecule id="Q9Y520-4"/>
    <property type="protein sequence ID" value="ENSP00000410219.3"/>
    <property type="gene ID" value="ENSG00000117523.18"/>
</dbReference>
<dbReference type="Ensembl" id="ENST00000647382.2">
    <molecule id="Q9Y520-7"/>
    <property type="protein sequence ID" value="ENSP00000495867.2"/>
    <property type="gene ID" value="ENSG00000117523.18"/>
</dbReference>
<dbReference type="GeneID" id="23215"/>
<dbReference type="KEGG" id="hsa:23215"/>
<dbReference type="MANE-Select" id="ENST00000647382.2">
    <molecule id="Q9Y520-7"/>
    <property type="protein sequence ID" value="ENSP00000495867.2"/>
    <property type="RefSeq nucleotide sequence ID" value="NM_001387844.1"/>
    <property type="RefSeq protein sequence ID" value="NP_001374773.1"/>
</dbReference>
<dbReference type="UCSC" id="uc010pmg.3">
    <molecule id="Q9Y520-1"/>
    <property type="organism name" value="human"/>
</dbReference>
<dbReference type="AGR" id="HGNC:24903"/>
<dbReference type="CTD" id="23215"/>
<dbReference type="DisGeNET" id="23215"/>
<dbReference type="GeneCards" id="PRRC2C"/>
<dbReference type="HGNC" id="HGNC:24903">
    <property type="gene designation" value="PRRC2C"/>
</dbReference>
<dbReference type="HPA" id="ENSG00000117523">
    <property type="expression patterns" value="Low tissue specificity"/>
</dbReference>
<dbReference type="MIM" id="617373">
    <property type="type" value="gene"/>
</dbReference>
<dbReference type="neXtProt" id="NX_Q9Y520"/>
<dbReference type="OpenTargets" id="ENSG00000117523"/>
<dbReference type="PharmGKB" id="PA165750415"/>
<dbReference type="VEuPathDB" id="HostDB:ENSG00000117523"/>
<dbReference type="eggNOG" id="KOG4817">
    <property type="taxonomic scope" value="Eukaryota"/>
</dbReference>
<dbReference type="GeneTree" id="ENSGT00950000183161"/>
<dbReference type="InParanoid" id="Q9Y520"/>
<dbReference type="OMA" id="APIMQAP"/>
<dbReference type="OrthoDB" id="1939715at2759"/>
<dbReference type="PAN-GO" id="Q9Y520">
    <property type="GO annotations" value="1 GO annotation based on evolutionary models"/>
</dbReference>
<dbReference type="TreeFam" id="TF328738"/>
<dbReference type="PathwayCommons" id="Q9Y520"/>
<dbReference type="SignaLink" id="Q9Y520"/>
<dbReference type="BioGRID-ORCS" id="23215">
    <property type="hits" value="56 hits in 1164 CRISPR screens"/>
</dbReference>
<dbReference type="CD-CODE" id="232F8A39">
    <property type="entry name" value="P-body"/>
</dbReference>
<dbReference type="CD-CODE" id="DEE660B4">
    <property type="entry name" value="Stress granule"/>
</dbReference>
<dbReference type="ChiTaRS" id="PRRC2C">
    <property type="organism name" value="human"/>
</dbReference>
<dbReference type="GenomeRNAi" id="23215"/>
<dbReference type="Pharos" id="Q9Y520">
    <property type="development level" value="Tbio"/>
</dbReference>
<dbReference type="PRO" id="PR:Q9Y520"/>
<dbReference type="Proteomes" id="UP000005640">
    <property type="component" value="Chromosome 1"/>
</dbReference>
<dbReference type="RNAct" id="Q9Y520">
    <property type="molecule type" value="protein"/>
</dbReference>
<dbReference type="Bgee" id="ENSG00000117523">
    <property type="expression patterns" value="Expressed in epithelium of nasopharynx and 208 other cell types or tissues"/>
</dbReference>
<dbReference type="ExpressionAtlas" id="Q9Y520">
    <property type="expression patterns" value="baseline and differential"/>
</dbReference>
<dbReference type="GO" id="GO:0010494">
    <property type="term" value="C:cytoplasmic stress granule"/>
    <property type="evidence" value="ECO:0007669"/>
    <property type="project" value="UniProtKB-SubCell"/>
</dbReference>
<dbReference type="GO" id="GO:0005829">
    <property type="term" value="C:cytosol"/>
    <property type="evidence" value="ECO:0000314"/>
    <property type="project" value="HPA"/>
</dbReference>
<dbReference type="GO" id="GO:0016020">
    <property type="term" value="C:membrane"/>
    <property type="evidence" value="ECO:0007005"/>
    <property type="project" value="UniProtKB"/>
</dbReference>
<dbReference type="GO" id="GO:0003723">
    <property type="term" value="F:RNA binding"/>
    <property type="evidence" value="ECO:0007005"/>
    <property type="project" value="UniProtKB"/>
</dbReference>
<dbReference type="GO" id="GO:0002244">
    <property type="term" value="P:hematopoietic progenitor cell differentiation"/>
    <property type="evidence" value="ECO:0000318"/>
    <property type="project" value="GO_Central"/>
</dbReference>
<dbReference type="GO" id="GO:0034063">
    <property type="term" value="P:stress granule assembly"/>
    <property type="evidence" value="ECO:0000315"/>
    <property type="project" value="UniProtKB"/>
</dbReference>
<dbReference type="InterPro" id="IPR009738">
    <property type="entry name" value="BAT2_N"/>
</dbReference>
<dbReference type="InterPro" id="IPR033184">
    <property type="entry name" value="PRRC2"/>
</dbReference>
<dbReference type="PANTHER" id="PTHR14038">
    <property type="entry name" value="BAT2 HLA-B-ASSOCIATED TRANSCRIPT 2"/>
    <property type="match status" value="1"/>
</dbReference>
<dbReference type="PANTHER" id="PTHR14038:SF6">
    <property type="entry name" value="PROTEIN PRRC2C"/>
    <property type="match status" value="1"/>
</dbReference>
<dbReference type="Pfam" id="PF07001">
    <property type="entry name" value="BAT2_N"/>
    <property type="match status" value="1"/>
</dbReference>
<feature type="chain" id="PRO_0000349239" description="Protein PRRC2C">
    <location>
        <begin position="1"/>
        <end position="2896"/>
    </location>
</feature>
<feature type="region of interest" description="Disordered" evidence="3">
    <location>
        <begin position="28"/>
        <end position="212"/>
    </location>
</feature>
<feature type="region of interest" description="Disordered" evidence="3">
    <location>
        <begin position="264"/>
        <end position="729"/>
    </location>
</feature>
<feature type="region of interest" description="Disordered" evidence="3">
    <location>
        <begin position="750"/>
        <end position="788"/>
    </location>
</feature>
<feature type="region of interest" description="Disordered" evidence="3">
    <location>
        <begin position="804"/>
        <end position="1118"/>
    </location>
</feature>
<feature type="region of interest" description="Disordered" evidence="3">
    <location>
        <begin position="1143"/>
        <end position="1647"/>
    </location>
</feature>
<feature type="region of interest" description="Disordered" evidence="3">
    <location>
        <begin position="1670"/>
        <end position="1785"/>
    </location>
</feature>
<feature type="region of interest" description="Disordered" evidence="3">
    <location>
        <begin position="1905"/>
        <end position="1991"/>
    </location>
</feature>
<feature type="region of interest" description="Disordered" evidence="3">
    <location>
        <begin position="2005"/>
        <end position="2164"/>
    </location>
</feature>
<feature type="region of interest" description="Disordered" evidence="3">
    <location>
        <begin position="2218"/>
        <end position="2238"/>
    </location>
</feature>
<feature type="region of interest" description="Disordered" evidence="3">
    <location>
        <begin position="2257"/>
        <end position="2290"/>
    </location>
</feature>
<feature type="region of interest" description="Disordered" evidence="3">
    <location>
        <begin position="2317"/>
        <end position="2341"/>
    </location>
</feature>
<feature type="region of interest" description="Disordered" evidence="3">
    <location>
        <begin position="2668"/>
        <end position="2701"/>
    </location>
</feature>
<feature type="region of interest" description="Disordered" evidence="3">
    <location>
        <begin position="2824"/>
        <end position="2896"/>
    </location>
</feature>
<feature type="coiled-coil region" evidence="2">
    <location>
        <begin position="1020"/>
        <end position="1046"/>
    </location>
</feature>
<feature type="coiled-coil region" evidence="2">
    <location>
        <begin position="1682"/>
        <end position="1717"/>
    </location>
</feature>
<feature type="compositionally biased region" description="Basic and acidic residues" evidence="3">
    <location>
        <begin position="88"/>
        <end position="97"/>
    </location>
</feature>
<feature type="compositionally biased region" description="Low complexity" evidence="3">
    <location>
        <begin position="105"/>
        <end position="119"/>
    </location>
</feature>
<feature type="compositionally biased region" description="Polar residues" evidence="3">
    <location>
        <begin position="134"/>
        <end position="144"/>
    </location>
</feature>
<feature type="compositionally biased region" description="Basic and acidic residues" evidence="3">
    <location>
        <begin position="151"/>
        <end position="160"/>
    </location>
</feature>
<feature type="compositionally biased region" description="Polar residues" evidence="3">
    <location>
        <begin position="201"/>
        <end position="211"/>
    </location>
</feature>
<feature type="compositionally biased region" description="Basic and acidic residues" evidence="3">
    <location>
        <begin position="301"/>
        <end position="310"/>
    </location>
</feature>
<feature type="compositionally biased region" description="Polar residues" evidence="3">
    <location>
        <begin position="341"/>
        <end position="358"/>
    </location>
</feature>
<feature type="compositionally biased region" description="Basic and acidic residues" evidence="3">
    <location>
        <begin position="359"/>
        <end position="368"/>
    </location>
</feature>
<feature type="compositionally biased region" description="Polar residues" evidence="3">
    <location>
        <begin position="370"/>
        <end position="381"/>
    </location>
</feature>
<feature type="compositionally biased region" description="Polar residues" evidence="3">
    <location>
        <begin position="395"/>
        <end position="405"/>
    </location>
</feature>
<feature type="compositionally biased region" description="Basic and acidic residues" evidence="3">
    <location>
        <begin position="465"/>
        <end position="648"/>
    </location>
</feature>
<feature type="compositionally biased region" description="Low complexity" evidence="3">
    <location>
        <begin position="676"/>
        <end position="708"/>
    </location>
</feature>
<feature type="compositionally biased region" description="Pro residues" evidence="3">
    <location>
        <begin position="759"/>
        <end position="769"/>
    </location>
</feature>
<feature type="compositionally biased region" description="Basic and acidic residues" evidence="3">
    <location>
        <begin position="825"/>
        <end position="836"/>
    </location>
</feature>
<feature type="compositionally biased region" description="Basic and acidic residues" evidence="3">
    <location>
        <begin position="852"/>
        <end position="867"/>
    </location>
</feature>
<feature type="compositionally biased region" description="Basic and acidic residues" evidence="3">
    <location>
        <begin position="878"/>
        <end position="888"/>
    </location>
</feature>
<feature type="compositionally biased region" description="Basic and acidic residues" evidence="3">
    <location>
        <begin position="954"/>
        <end position="993"/>
    </location>
</feature>
<feature type="compositionally biased region" description="Basic and acidic residues" evidence="3">
    <location>
        <begin position="1000"/>
        <end position="1010"/>
    </location>
</feature>
<feature type="compositionally biased region" description="Basic and acidic residues" evidence="3">
    <location>
        <begin position="1020"/>
        <end position="1058"/>
    </location>
</feature>
<feature type="compositionally biased region" description="Pro residues" evidence="3">
    <location>
        <begin position="1059"/>
        <end position="1081"/>
    </location>
</feature>
<feature type="compositionally biased region" description="Polar residues" evidence="3">
    <location>
        <begin position="1089"/>
        <end position="1100"/>
    </location>
</feature>
<feature type="compositionally biased region" description="Basic and acidic residues" evidence="3">
    <location>
        <begin position="1143"/>
        <end position="1163"/>
    </location>
</feature>
<feature type="compositionally biased region" description="Basic and acidic residues" evidence="3">
    <location>
        <begin position="1170"/>
        <end position="1180"/>
    </location>
</feature>
<feature type="compositionally biased region" description="Basic and acidic residues" evidence="3">
    <location>
        <begin position="1214"/>
        <end position="1230"/>
    </location>
</feature>
<feature type="compositionally biased region" description="Basic and acidic residues" evidence="3">
    <location>
        <begin position="1237"/>
        <end position="1248"/>
    </location>
</feature>
<feature type="compositionally biased region" description="Basic and acidic residues" evidence="3">
    <location>
        <begin position="1261"/>
        <end position="1297"/>
    </location>
</feature>
<feature type="compositionally biased region" description="Basic and acidic residues" evidence="3">
    <location>
        <begin position="1305"/>
        <end position="1330"/>
    </location>
</feature>
<feature type="compositionally biased region" description="Basic and acidic residues" evidence="3">
    <location>
        <begin position="1381"/>
        <end position="1418"/>
    </location>
</feature>
<feature type="compositionally biased region" description="Basic and acidic residues" evidence="3">
    <location>
        <begin position="1429"/>
        <end position="1446"/>
    </location>
</feature>
<feature type="compositionally biased region" description="Polar residues" evidence="3">
    <location>
        <begin position="1457"/>
        <end position="1469"/>
    </location>
</feature>
<feature type="compositionally biased region" description="Polar residues" evidence="3">
    <location>
        <begin position="1477"/>
        <end position="1491"/>
    </location>
</feature>
<feature type="compositionally biased region" description="Basic and acidic residues" evidence="3">
    <location>
        <begin position="1505"/>
        <end position="1517"/>
    </location>
</feature>
<feature type="compositionally biased region" description="Basic and acidic residues" evidence="3">
    <location>
        <begin position="1620"/>
        <end position="1634"/>
    </location>
</feature>
<feature type="compositionally biased region" description="Basic and acidic residues" evidence="3">
    <location>
        <begin position="1692"/>
        <end position="1704"/>
    </location>
</feature>
<feature type="compositionally biased region" description="Low complexity" evidence="3">
    <location>
        <begin position="1742"/>
        <end position="1785"/>
    </location>
</feature>
<feature type="compositionally biased region" description="Pro residues" evidence="3">
    <location>
        <begin position="1913"/>
        <end position="1929"/>
    </location>
</feature>
<feature type="compositionally biased region" description="Low complexity" evidence="3">
    <location>
        <begin position="1943"/>
        <end position="1952"/>
    </location>
</feature>
<feature type="compositionally biased region" description="Polar residues" evidence="3">
    <location>
        <begin position="1976"/>
        <end position="1986"/>
    </location>
</feature>
<feature type="compositionally biased region" description="Polar residues" evidence="3">
    <location>
        <begin position="2019"/>
        <end position="2035"/>
    </location>
</feature>
<feature type="compositionally biased region" description="Basic and acidic residues" evidence="3">
    <location>
        <begin position="2075"/>
        <end position="2088"/>
    </location>
</feature>
<feature type="compositionally biased region" description="Basic and acidic residues" evidence="3">
    <location>
        <begin position="2108"/>
        <end position="2132"/>
    </location>
</feature>
<feature type="compositionally biased region" description="Basic and acidic residues" evidence="3">
    <location>
        <begin position="2257"/>
        <end position="2267"/>
    </location>
</feature>
<feature type="compositionally biased region" description="Polar residues" evidence="3">
    <location>
        <begin position="2269"/>
        <end position="2290"/>
    </location>
</feature>
<feature type="compositionally biased region" description="Low complexity" evidence="3">
    <location>
        <begin position="2320"/>
        <end position="2334"/>
    </location>
</feature>
<feature type="compositionally biased region" description="Polar residues" evidence="3">
    <location>
        <begin position="2679"/>
        <end position="2701"/>
    </location>
</feature>
<feature type="compositionally biased region" description="Polar residues" evidence="3">
    <location>
        <begin position="2824"/>
        <end position="2833"/>
    </location>
</feature>
<feature type="modified residue" description="N6-acetyllysine" evidence="22">
    <location>
        <position position="27"/>
    </location>
</feature>
<feature type="modified residue" description="Phosphoserine" evidence="20 23 27">
    <location>
        <position position="187"/>
    </location>
</feature>
<feature type="modified residue" description="Phosphoserine" evidence="20">
    <location>
        <position position="191"/>
    </location>
</feature>
<feature type="modified residue" description="Asymmetric dimethylarginine; alternate" evidence="1">
    <location>
        <position position="242"/>
    </location>
</feature>
<feature type="modified residue" description="Omega-N-methylarginine; alternate" evidence="28">
    <location>
        <position position="242"/>
    </location>
</feature>
<feature type="modified residue" description="Asymmetric dimethylarginine" evidence="28">
    <location>
        <position position="255"/>
    </location>
</feature>
<feature type="modified residue" description="Asymmetric dimethylarginine" evidence="28">
    <location>
        <position position="266"/>
    </location>
</feature>
<feature type="modified residue" description="Omega-N-methylarginine" evidence="28">
    <location>
        <position position="279"/>
    </location>
</feature>
<feature type="modified residue" description="Omega-N-methylarginine" evidence="28">
    <location>
        <position position="281"/>
    </location>
</feature>
<feature type="modified residue" description="Phosphoserine" evidence="29">
    <location>
        <position position="335"/>
    </location>
</feature>
<feature type="modified residue" description="N6-acetyllysine" evidence="22">
    <location>
        <position position="392"/>
    </location>
</feature>
<feature type="modified residue" description="Phosphoserine" evidence="27">
    <location>
        <position position="395"/>
    </location>
</feature>
<feature type="modified residue" description="Phosphoserine" evidence="18 27">
    <location>
        <position position="500"/>
    </location>
</feature>
<feature type="modified residue" description="Phosphoserine" evidence="18 20 24 27">
    <location>
        <position position="779"/>
    </location>
</feature>
<feature type="modified residue" description="Phosphoserine" evidence="27">
    <location>
        <position position="785"/>
    </location>
</feature>
<feature type="modified residue" description="Phosphoserine" evidence="24">
    <location>
        <position position="801"/>
    </location>
</feature>
<feature type="modified residue" description="Phosphoserine" evidence="27">
    <location>
        <position position="867"/>
    </location>
</feature>
<feature type="modified residue" description="Phosphoserine" evidence="18 20 23 27">
    <location>
        <position position="878"/>
    </location>
</feature>
<feature type="modified residue" description="Phosphoserine" evidence="27">
    <location>
        <position position="920"/>
    </location>
</feature>
<feature type="modified residue" description="Phosphoserine" evidence="1">
    <location>
        <position position="929"/>
    </location>
</feature>
<feature type="modified residue" description="Phosphoserine" evidence="27">
    <location>
        <position position="1242"/>
    </location>
</feature>
<feature type="modified residue" description="Phosphoserine" evidence="26 27">
    <location>
        <position position="1246"/>
    </location>
</feature>
<feature type="modified residue" description="Phosphoserine" evidence="26 27">
    <location>
        <position position="1248"/>
    </location>
</feature>
<feature type="modified residue" description="Phosphoserine" evidence="27">
    <location>
        <position position="1249"/>
    </location>
</feature>
<feature type="modified residue" description="Phosphoserine" evidence="26 27">
    <location>
        <position position="1263"/>
    </location>
</feature>
<feature type="modified residue" description="Phosphothreonine" evidence="26 27">
    <location>
        <position position="1265"/>
    </location>
</feature>
<feature type="modified residue" description="Phosphothreonine" evidence="26 27 29">
    <location>
        <position position="1267"/>
    </location>
</feature>
<feature type="modified residue" description="Phosphoserine" evidence="27">
    <location>
        <position position="1544"/>
    </location>
</feature>
<feature type="modified residue" description="Phosphothreonine" evidence="24 27">
    <location>
        <position position="1965"/>
    </location>
</feature>
<feature type="modified residue" description="Phosphoserine" evidence="1">
    <location>
        <position position="1983"/>
    </location>
</feature>
<feature type="modified residue" description="Phosphoserine" evidence="20 24 26">
    <location>
        <position position="2013"/>
    </location>
</feature>
<feature type="modified residue" description="Phosphoserine" evidence="17 18 21 24 26 27">
    <location>
        <position position="2105"/>
    </location>
</feature>
<feature type="modified residue" description="Phosphoserine" evidence="19 20 27">
    <location>
        <position position="2143"/>
    </location>
</feature>
<feature type="modified residue" description="Phosphoserine" evidence="27">
    <location>
        <position position="2260"/>
    </location>
</feature>
<feature type="modified residue" description="Phosphothreonine" evidence="18 19 20 24 27">
    <location>
        <position position="2673"/>
    </location>
</feature>
<feature type="modified residue" description="Phosphothreonine" evidence="17">
    <location>
        <position position="2682"/>
    </location>
</feature>
<feature type="modified residue" description="Phosphoserine" evidence="17">
    <location>
        <position position="2686"/>
    </location>
</feature>
<feature type="modified residue" description="Phosphoserine" evidence="26">
    <location>
        <position position="2694"/>
    </location>
</feature>
<feature type="modified residue" description="Omega-N-methylarginine" evidence="1">
    <location>
        <position position="2814"/>
    </location>
</feature>
<feature type="modified residue" description="Asymmetric dimethylarginine; alternate" evidence="1">
    <location>
        <position position="2823"/>
    </location>
</feature>
<feature type="modified residue" description="Omega-N-methylarginine; alternate" evidence="1">
    <location>
        <position position="2823"/>
    </location>
</feature>
<feature type="cross-link" description="Glycyl lysine isopeptide (Lys-Gly) (interchain with G-Cter in SUMO2)" evidence="30 31">
    <location>
        <position position="1133"/>
    </location>
</feature>
<feature type="splice variant" id="VSP_035244" description="In isoform 2." evidence="9">
    <location>
        <begin position="1"/>
        <end position="243"/>
    </location>
</feature>
<feature type="splice variant" id="VSP_035250" description="In isoform 7." evidence="9 13">
    <original>T</original>
    <variation>TVA</variation>
    <location>
        <position position="37"/>
    </location>
</feature>
<feature type="splice variant" id="VSP_035245" description="In isoform 5." evidence="7">
    <location>
        <begin position="1759"/>
        <end position="1805"/>
    </location>
</feature>
<feature type="splice variant" id="VSP_035246" description="In isoform 6." evidence="10">
    <location>
        <begin position="2185"/>
        <end position="2249"/>
    </location>
</feature>
<feature type="splice variant" id="VSP_035247" description="In isoform 3." evidence="11 12">
    <original>PFRATSTSPNSQSS</original>
    <variation>SGLLLQVRTASPAK</variation>
    <location>
        <begin position="2687"/>
        <end position="2700"/>
    </location>
</feature>
<feature type="splice variant" id="VSP_035248" description="In isoform 3." evidence="11 12">
    <location>
        <begin position="2701"/>
        <end position="2896"/>
    </location>
</feature>
<feature type="splice variant" id="VSP_035249" description="In isoform 4 and isoform 6." evidence="8 10">
    <location>
        <begin position="2732"/>
        <end position="2810"/>
    </location>
</feature>
<feature type="sequence variant" id="VAR_046290" description="In dbSNP:rs10913157.">
    <original>A</original>
    <variation>T</variation>
    <location>
        <position position="235"/>
    </location>
</feature>
<feature type="sequence variant" id="VAR_046291" description="In dbSNP:rs36013361.">
    <original>N</original>
    <variation>K</variation>
    <location>
        <position position="343"/>
    </location>
</feature>
<feature type="sequence variant" id="VAR_046292" description="In dbSNP:rs704839.">
    <original>E</original>
    <variation>G</variation>
    <location>
        <position position="468"/>
    </location>
</feature>
<feature type="sequence variant" id="VAR_046293" description="In dbSNP:rs760644." evidence="25">
    <original>A</original>
    <variation>T</variation>
    <location>
        <position position="906"/>
    </location>
</feature>
<feature type="sequence variant" id="VAR_046294" description="In dbSNP:rs34269512.">
    <original>P</original>
    <variation>S</variation>
    <location>
        <position position="959"/>
    </location>
</feature>
<feature type="sequence variant" id="VAR_046295" description="In dbSNP:rs235468." evidence="4">
    <original>S</original>
    <variation>C</variation>
    <location>
        <position position="1624"/>
    </location>
</feature>
<feature type="sequence variant" id="VAR_046296" description="In dbSNP:rs1687056.">
    <original>P</original>
    <variation>S</variation>
    <location>
        <position position="1771"/>
    </location>
</feature>
<feature type="sequence variant" id="VAR_046297" description="In dbSNP:rs3820169.">
    <original>L</original>
    <variation>R</variation>
    <location>
        <position position="1868"/>
    </location>
</feature>
<feature type="sequence variant" id="VAR_046298" description="In dbSNP:rs12025905.">
    <original>A</original>
    <variation>T</variation>
    <location>
        <position position="1885"/>
    </location>
</feature>
<feature type="sequence variant" id="VAR_046299" description="In dbSNP:rs183523.">
    <original>P</original>
    <variation>R</variation>
    <location>
        <position position="1924"/>
    </location>
</feature>
<feature type="sequence variant" id="VAR_059584" description="In dbSNP:rs2421847.">
    <original>T</original>
    <variation>A</variation>
    <location>
        <position position="2717"/>
    </location>
</feature>
<feature type="sequence conflict" description="In Ref. 5; AAH45713." evidence="14" ref="5">
    <original>EIS</original>
    <variation>GIY</variation>
    <location>
        <begin position="454"/>
        <end position="456"/>
    </location>
</feature>
<feature type="sequence conflict" description="In Ref. 5; AAH45713." evidence="14" ref="5">
    <original>Q</original>
    <variation>P</variation>
    <location>
        <position position="561"/>
    </location>
</feature>
<feature type="sequence conflict" description="In Ref. 9; CAB82345." evidence="14" ref="9">
    <original>V</original>
    <variation>A</variation>
    <location>
        <position position="1940"/>
    </location>
</feature>
<feature type="sequence conflict" description="In Ref. 10; BAB14056." evidence="14" ref="10">
    <original>A</original>
    <variation>V</variation>
    <location>
        <position position="2443"/>
    </location>
</feature>
<feature type="sequence conflict" description="In Ref. 10; BAA90997." evidence="14" ref="10">
    <original>I</original>
    <variation>V</variation>
    <location>
        <position position="2539"/>
    </location>
</feature>
<gene>
    <name evidence="16" type="primary">PRRC2C</name>
    <name type="synonym">BAT2D1</name>
    <name type="synonym">BAT2L2</name>
    <name type="synonym">KIAA1096</name>
    <name type="synonym">XTP2</name>
</gene>
<name>PRC2C_HUMAN</name>
<accession>Q9Y520</accession>
<accession>Q05DM8</accession>
<accession>Q49A39</accession>
<accession>Q6PD54</accession>
<accession>Q9H2N2</accession>
<accession>Q9HA05</accession>
<accession>Q9NSM8</accession>
<accession>Q9NXL3</accession>
<accession>Q9UF29</accession>
<accession>Q9UPQ6</accession>
<reference key="1">
    <citation type="submission" date="2002-02" db="EMBL/GenBank/DDBJ databases">
        <title>Cloning and identification of human gene 2 transactivated by hepatitis B virus X antigen.</title>
        <authorList>
            <person name="Liu Y."/>
            <person name="Cheng J."/>
            <person name="Lu Y."/>
            <person name="Wang G."/>
            <person name="Mu J."/>
            <person name="Li K."/>
            <person name="Zhang L."/>
        </authorList>
    </citation>
    <scope>NUCLEOTIDE SEQUENCE [MRNA] (ISOFORM 3)</scope>
</reference>
<reference key="2">
    <citation type="submission" date="1999-07" db="EMBL/GenBank/DDBJ databases">
        <authorList>
            <person name="Rhodes S."/>
            <person name="Huckle E."/>
        </authorList>
    </citation>
    <scope>NUCLEOTIDE SEQUENCE [LARGE SCALE MRNA] (ISOFORM 3)</scope>
</reference>
<reference key="3">
    <citation type="journal article" date="2006" name="Nature">
        <title>The DNA sequence and biological annotation of human chromosome 1.</title>
        <authorList>
            <person name="Gregory S.G."/>
            <person name="Barlow K.F."/>
            <person name="McLay K.E."/>
            <person name="Kaul R."/>
            <person name="Swarbreck D."/>
            <person name="Dunham A."/>
            <person name="Scott C.E."/>
            <person name="Howe K.L."/>
            <person name="Woodfine K."/>
            <person name="Spencer C.C.A."/>
            <person name="Jones M.C."/>
            <person name="Gillson C."/>
            <person name="Searle S."/>
            <person name="Zhou Y."/>
            <person name="Kokocinski F."/>
            <person name="McDonald L."/>
            <person name="Evans R."/>
            <person name="Phillips K."/>
            <person name="Atkinson A."/>
            <person name="Cooper R."/>
            <person name="Jones C."/>
            <person name="Hall R.E."/>
            <person name="Andrews T.D."/>
            <person name="Lloyd C."/>
            <person name="Ainscough R."/>
            <person name="Almeida J.P."/>
            <person name="Ambrose K.D."/>
            <person name="Anderson F."/>
            <person name="Andrew R.W."/>
            <person name="Ashwell R.I.S."/>
            <person name="Aubin K."/>
            <person name="Babbage A.K."/>
            <person name="Bagguley C.L."/>
            <person name="Bailey J."/>
            <person name="Beasley H."/>
            <person name="Bethel G."/>
            <person name="Bird C.P."/>
            <person name="Bray-Allen S."/>
            <person name="Brown J.Y."/>
            <person name="Brown A.J."/>
            <person name="Buckley D."/>
            <person name="Burton J."/>
            <person name="Bye J."/>
            <person name="Carder C."/>
            <person name="Chapman J.C."/>
            <person name="Clark S.Y."/>
            <person name="Clarke G."/>
            <person name="Clee C."/>
            <person name="Cobley V."/>
            <person name="Collier R.E."/>
            <person name="Corby N."/>
            <person name="Coville G.J."/>
            <person name="Davies J."/>
            <person name="Deadman R."/>
            <person name="Dunn M."/>
            <person name="Earthrowl M."/>
            <person name="Ellington A.G."/>
            <person name="Errington H."/>
            <person name="Frankish A."/>
            <person name="Frankland J."/>
            <person name="French L."/>
            <person name="Garner P."/>
            <person name="Garnett J."/>
            <person name="Gay L."/>
            <person name="Ghori M.R.J."/>
            <person name="Gibson R."/>
            <person name="Gilby L.M."/>
            <person name="Gillett W."/>
            <person name="Glithero R.J."/>
            <person name="Grafham D.V."/>
            <person name="Griffiths C."/>
            <person name="Griffiths-Jones S."/>
            <person name="Grocock R."/>
            <person name="Hammond S."/>
            <person name="Harrison E.S.I."/>
            <person name="Hart E."/>
            <person name="Haugen E."/>
            <person name="Heath P.D."/>
            <person name="Holmes S."/>
            <person name="Holt K."/>
            <person name="Howden P.J."/>
            <person name="Hunt A.R."/>
            <person name="Hunt S.E."/>
            <person name="Hunter G."/>
            <person name="Isherwood J."/>
            <person name="James R."/>
            <person name="Johnson C."/>
            <person name="Johnson D."/>
            <person name="Joy A."/>
            <person name="Kay M."/>
            <person name="Kershaw J.K."/>
            <person name="Kibukawa M."/>
            <person name="Kimberley A.M."/>
            <person name="King A."/>
            <person name="Knights A.J."/>
            <person name="Lad H."/>
            <person name="Laird G."/>
            <person name="Lawlor S."/>
            <person name="Leongamornlert D.A."/>
            <person name="Lloyd D.M."/>
            <person name="Loveland J."/>
            <person name="Lovell J."/>
            <person name="Lush M.J."/>
            <person name="Lyne R."/>
            <person name="Martin S."/>
            <person name="Mashreghi-Mohammadi M."/>
            <person name="Matthews L."/>
            <person name="Matthews N.S.W."/>
            <person name="McLaren S."/>
            <person name="Milne S."/>
            <person name="Mistry S."/>
            <person name="Moore M.J.F."/>
            <person name="Nickerson T."/>
            <person name="O'Dell C.N."/>
            <person name="Oliver K."/>
            <person name="Palmeiri A."/>
            <person name="Palmer S.A."/>
            <person name="Parker A."/>
            <person name="Patel D."/>
            <person name="Pearce A.V."/>
            <person name="Peck A.I."/>
            <person name="Pelan S."/>
            <person name="Phelps K."/>
            <person name="Phillimore B.J."/>
            <person name="Plumb R."/>
            <person name="Rajan J."/>
            <person name="Raymond C."/>
            <person name="Rouse G."/>
            <person name="Saenphimmachak C."/>
            <person name="Sehra H.K."/>
            <person name="Sheridan E."/>
            <person name="Shownkeen R."/>
            <person name="Sims S."/>
            <person name="Skuce C.D."/>
            <person name="Smith M."/>
            <person name="Steward C."/>
            <person name="Subramanian S."/>
            <person name="Sycamore N."/>
            <person name="Tracey A."/>
            <person name="Tromans A."/>
            <person name="Van Helmond Z."/>
            <person name="Wall M."/>
            <person name="Wallis J.M."/>
            <person name="White S."/>
            <person name="Whitehead S.L."/>
            <person name="Wilkinson J.E."/>
            <person name="Willey D.L."/>
            <person name="Williams H."/>
            <person name="Wilming L."/>
            <person name="Wray P.W."/>
            <person name="Wu Z."/>
            <person name="Coulson A."/>
            <person name="Vaudin M."/>
            <person name="Sulston J.E."/>
            <person name="Durbin R.M."/>
            <person name="Hubbard T."/>
            <person name="Wooster R."/>
            <person name="Dunham I."/>
            <person name="Carter N.P."/>
            <person name="McVean G."/>
            <person name="Ross M.T."/>
            <person name="Harrow J."/>
            <person name="Olson M.V."/>
            <person name="Beck S."/>
            <person name="Rogers J."/>
            <person name="Bentley D.R."/>
        </authorList>
    </citation>
    <scope>NUCLEOTIDE SEQUENCE [LARGE SCALE GENOMIC DNA]</scope>
</reference>
<reference key="4">
    <citation type="submission" date="2000-05" db="EMBL/GenBank/DDBJ databases">
        <authorList>
            <person name="Xu X."/>
            <person name="Yang Y."/>
            <person name="Gao G."/>
            <person name="Xiao H."/>
            <person name="Chen Z."/>
            <person name="Han Z."/>
        </authorList>
    </citation>
    <scope>NUCLEOTIDE SEQUENCE [MRNA] OF 1-577 (ISOFORM 7)</scope>
</reference>
<reference key="5">
    <citation type="journal article" date="2004" name="Genome Res.">
        <title>The status, quality, and expansion of the NIH full-length cDNA project: the Mammalian Gene Collection (MGC).</title>
        <authorList>
            <consortium name="The MGC Project Team"/>
        </authorList>
    </citation>
    <scope>NUCLEOTIDE SEQUENCE [LARGE SCALE MRNA] OF 1-571 (ISOFORM 7)</scope>
    <scope>NUCLEOTIDE SEQUENCE [LARGE SCALE MRNA] OF 1-561 (ISOFORM 2)</scope>
    <source>
        <tissue>Brain</tissue>
        <tissue>Placenta</tissue>
        <tissue>Skin</tissue>
    </source>
</reference>
<reference key="6">
    <citation type="submission" date="2007-07" db="UniProtKB">
        <authorList>
            <person name="Bienvenut W.V."/>
            <person name="Heiserich L."/>
            <person name="Boulahbel H."/>
            <person name="Gottlieb E."/>
        </authorList>
    </citation>
    <scope>PROTEIN SEQUENCE OF 17-27; 106-119; 375-387; 451-461; 639-665; 795-804; 834-859; 1317-1324; 1516-1526; 1996-2007; 2101-2110; 2130-2148; 2629-2637 AND 2662-2679</scope>
    <scope>IDENTIFICATION BY MASS SPECTROMETRY</scope>
    <source>
        <tissue>Colon carcinoma</tissue>
    </source>
</reference>
<reference key="7">
    <citation type="journal article" date="1999" name="DNA Res.">
        <title>Prediction of the coding sequences of unidentified human genes. XIV. The complete sequences of 100 new cDNA clones from brain which code for large proteins in vitro.</title>
        <authorList>
            <person name="Kikuno R."/>
            <person name="Nagase T."/>
            <person name="Ishikawa K."/>
            <person name="Hirosawa M."/>
            <person name="Miyajima N."/>
            <person name="Tanaka A."/>
            <person name="Kotani H."/>
            <person name="Nomura N."/>
            <person name="Ohara O."/>
        </authorList>
    </citation>
    <scope>NUCLEOTIDE SEQUENCE [LARGE SCALE MRNA] OF 931-2896 (ISOFORM 5)</scope>
    <scope>VARIANT CYS-1624</scope>
    <source>
        <tissue>Brain</tissue>
    </source>
</reference>
<reference key="8">
    <citation type="journal article" date="2002" name="DNA Res.">
        <title>Construction of expression-ready cDNA clones for KIAA genes: manual curation of 330 KIAA cDNA clones.</title>
        <authorList>
            <person name="Nakajima D."/>
            <person name="Okazaki N."/>
            <person name="Yamakawa H."/>
            <person name="Kikuno R."/>
            <person name="Ohara O."/>
            <person name="Nagase T."/>
        </authorList>
    </citation>
    <scope>SEQUENCE REVISION</scope>
</reference>
<reference key="9">
    <citation type="journal article" date="2007" name="BMC Genomics">
        <title>The full-ORF clone resource of the German cDNA consortium.</title>
        <authorList>
            <person name="Bechtel S."/>
            <person name="Rosenfelder H."/>
            <person name="Duda A."/>
            <person name="Schmidt C.P."/>
            <person name="Ernst U."/>
            <person name="Wellenreuther R."/>
            <person name="Mehrle A."/>
            <person name="Schuster C."/>
            <person name="Bahr A."/>
            <person name="Bloecker H."/>
            <person name="Heubner D."/>
            <person name="Hoerlein A."/>
            <person name="Michel G."/>
            <person name="Wedler H."/>
            <person name="Koehrer K."/>
            <person name="Ottenwaelder B."/>
            <person name="Poustka A."/>
            <person name="Wiemann S."/>
            <person name="Schupp I."/>
        </authorList>
    </citation>
    <scope>NUCLEOTIDE SEQUENCE [LARGE SCALE MRNA] OF 1454-2896 (ISOFORM 6)</scope>
    <scope>NUCLEOTIDE SEQUENCE [LARGE SCALE MRNA] OF 2393-2896 (ISOFORM 4)</scope>
    <source>
        <tissue>Testis</tissue>
    </source>
</reference>
<reference key="10">
    <citation type="journal article" date="2004" name="Nat. Genet.">
        <title>Complete sequencing and characterization of 21,243 full-length human cDNAs.</title>
        <authorList>
            <person name="Ota T."/>
            <person name="Suzuki Y."/>
            <person name="Nishikawa T."/>
            <person name="Otsuki T."/>
            <person name="Sugiyama T."/>
            <person name="Irie R."/>
            <person name="Wakamatsu A."/>
            <person name="Hayashi K."/>
            <person name="Sato H."/>
            <person name="Nagai K."/>
            <person name="Kimura K."/>
            <person name="Makita H."/>
            <person name="Sekine M."/>
            <person name="Obayashi M."/>
            <person name="Nishi T."/>
            <person name="Shibahara T."/>
            <person name="Tanaka T."/>
            <person name="Ishii S."/>
            <person name="Yamamoto J."/>
            <person name="Saito K."/>
            <person name="Kawai Y."/>
            <person name="Isono Y."/>
            <person name="Nakamura Y."/>
            <person name="Nagahari K."/>
            <person name="Murakami K."/>
            <person name="Yasuda T."/>
            <person name="Iwayanagi T."/>
            <person name="Wagatsuma M."/>
            <person name="Shiratori A."/>
            <person name="Sudo H."/>
            <person name="Hosoiri T."/>
            <person name="Kaku Y."/>
            <person name="Kodaira H."/>
            <person name="Kondo H."/>
            <person name="Sugawara M."/>
            <person name="Takahashi M."/>
            <person name="Kanda K."/>
            <person name="Yokoi T."/>
            <person name="Furuya T."/>
            <person name="Kikkawa E."/>
            <person name="Omura Y."/>
            <person name="Abe K."/>
            <person name="Kamihara K."/>
            <person name="Katsuta N."/>
            <person name="Sato K."/>
            <person name="Tanikawa M."/>
            <person name="Yamazaki M."/>
            <person name="Ninomiya K."/>
            <person name="Ishibashi T."/>
            <person name="Yamashita H."/>
            <person name="Murakawa K."/>
            <person name="Fujimori K."/>
            <person name="Tanai H."/>
            <person name="Kimata M."/>
            <person name="Watanabe M."/>
            <person name="Hiraoka S."/>
            <person name="Chiba Y."/>
            <person name="Ishida S."/>
            <person name="Ono Y."/>
            <person name="Takiguchi S."/>
            <person name="Watanabe S."/>
            <person name="Yosida M."/>
            <person name="Hotuta T."/>
            <person name="Kusano J."/>
            <person name="Kanehori K."/>
            <person name="Takahashi-Fujii A."/>
            <person name="Hara H."/>
            <person name="Tanase T.-O."/>
            <person name="Nomura Y."/>
            <person name="Togiya S."/>
            <person name="Komai F."/>
            <person name="Hara R."/>
            <person name="Takeuchi K."/>
            <person name="Arita M."/>
            <person name="Imose N."/>
            <person name="Musashino K."/>
            <person name="Yuuki H."/>
            <person name="Oshima A."/>
            <person name="Sasaki N."/>
            <person name="Aotsuka S."/>
            <person name="Yoshikawa Y."/>
            <person name="Matsunawa H."/>
            <person name="Ichihara T."/>
            <person name="Shiohata N."/>
            <person name="Sano S."/>
            <person name="Moriya S."/>
            <person name="Momiyama H."/>
            <person name="Satoh N."/>
            <person name="Takami S."/>
            <person name="Terashima Y."/>
            <person name="Suzuki O."/>
            <person name="Nakagawa S."/>
            <person name="Senoh A."/>
            <person name="Mizoguchi H."/>
            <person name="Goto Y."/>
            <person name="Shimizu F."/>
            <person name="Wakebe H."/>
            <person name="Hishigaki H."/>
            <person name="Watanabe T."/>
            <person name="Sugiyama A."/>
            <person name="Takemoto M."/>
            <person name="Kawakami B."/>
            <person name="Yamazaki M."/>
            <person name="Watanabe K."/>
            <person name="Kumagai A."/>
            <person name="Itakura S."/>
            <person name="Fukuzumi Y."/>
            <person name="Fujimori Y."/>
            <person name="Komiyama M."/>
            <person name="Tashiro H."/>
            <person name="Tanigami A."/>
            <person name="Fujiwara T."/>
            <person name="Ono T."/>
            <person name="Yamada K."/>
            <person name="Fujii Y."/>
            <person name="Ozaki K."/>
            <person name="Hirao M."/>
            <person name="Ohmori Y."/>
            <person name="Kawabata A."/>
            <person name="Hikiji T."/>
            <person name="Kobatake N."/>
            <person name="Inagaki H."/>
            <person name="Ikema Y."/>
            <person name="Okamoto S."/>
            <person name="Okitani R."/>
            <person name="Kawakami T."/>
            <person name="Noguchi S."/>
            <person name="Itoh T."/>
            <person name="Shigeta K."/>
            <person name="Senba T."/>
            <person name="Matsumura K."/>
            <person name="Nakajima Y."/>
            <person name="Mizuno T."/>
            <person name="Morinaga M."/>
            <person name="Sasaki M."/>
            <person name="Togashi T."/>
            <person name="Oyama M."/>
            <person name="Hata H."/>
            <person name="Watanabe M."/>
            <person name="Komatsu T."/>
            <person name="Mizushima-Sugano J."/>
            <person name="Satoh T."/>
            <person name="Shirai Y."/>
            <person name="Takahashi Y."/>
            <person name="Nakagawa K."/>
            <person name="Okumura K."/>
            <person name="Nagase T."/>
            <person name="Nomura N."/>
            <person name="Kikuchi H."/>
            <person name="Masuho Y."/>
            <person name="Yamashita R."/>
            <person name="Nakai K."/>
            <person name="Yada T."/>
            <person name="Nakamura Y."/>
            <person name="Ohara O."/>
            <person name="Isogai T."/>
            <person name="Sugano S."/>
        </authorList>
    </citation>
    <scope>NUCLEOTIDE SEQUENCE [LARGE SCALE MRNA] OF 2029-2862 (ISOFORM 4)</scope>
    <source>
        <tissue>Colon mucosa</tissue>
        <tissue>Mammary gland</tissue>
    </source>
</reference>
<reference key="11">
    <citation type="journal article" date="2002" name="DNA Cell Biol.">
        <title>KIAA1096, a gene on chromosome 1q, is amplified and overexpressed in bladder cancer.</title>
        <authorList>
            <person name="Huang W.C."/>
            <person name="Taylor S."/>
            <person name="Nguyen T.B."/>
            <person name="Tomaszewski J.E."/>
            <person name="Libertino J.A."/>
            <person name="Malkowicz S.B."/>
            <person name="McGarvey T.W."/>
        </authorList>
    </citation>
    <scope>TISSUE SPECIFICITY</scope>
</reference>
<reference key="12">
    <citation type="journal article" date="2006" name="Cell">
        <title>Global, in vivo, and site-specific phosphorylation dynamics in signaling networks.</title>
        <authorList>
            <person name="Olsen J.V."/>
            <person name="Blagoev B."/>
            <person name="Gnad F."/>
            <person name="Macek B."/>
            <person name="Kumar C."/>
            <person name="Mortensen P."/>
            <person name="Mann M."/>
        </authorList>
    </citation>
    <scope>PHOSPHORYLATION [LARGE SCALE ANALYSIS] AT SER-500; SER-779; SER-878; SER-2105 AND THR-2673</scope>
    <scope>IDENTIFICATION BY MASS SPECTROMETRY [LARGE SCALE ANALYSIS]</scope>
    <source>
        <tissue>Cervix carcinoma</tissue>
    </source>
</reference>
<reference key="13">
    <citation type="journal article" date="2006" name="Nat. Biotechnol.">
        <title>A probability-based approach for high-throughput protein phosphorylation analysis and site localization.</title>
        <authorList>
            <person name="Beausoleil S.A."/>
            <person name="Villen J."/>
            <person name="Gerber S.A."/>
            <person name="Rush J."/>
            <person name="Gygi S.P."/>
        </authorList>
    </citation>
    <scope>PHOSPHORYLATION [LARGE SCALE ANALYSIS] AT SER-2105; THR-2682 AND SER-2686</scope>
    <scope>IDENTIFICATION BY MASS SPECTROMETRY [LARGE SCALE ANALYSIS]</scope>
    <source>
        <tissue>Cervix carcinoma</tissue>
    </source>
</reference>
<reference key="14">
    <citation type="journal article" date="2007" name="J. Proteome Res.">
        <title>Improved titanium dioxide enrichment of phosphopeptides from HeLa cells and high confident phosphopeptide identification by cross-validation of MS/MS and MS/MS/MS spectra.</title>
        <authorList>
            <person name="Yu L.R."/>
            <person name="Zhu Z."/>
            <person name="Chan K.C."/>
            <person name="Issaq H.J."/>
            <person name="Dimitrov D.S."/>
            <person name="Veenstra T.D."/>
        </authorList>
    </citation>
    <scope>PHOSPHORYLATION [LARGE SCALE ANALYSIS] AT SER-2143 AND THR-2673</scope>
    <scope>IDENTIFICATION BY MASS SPECTROMETRY [LARGE SCALE ANALYSIS]</scope>
    <source>
        <tissue>Cervix carcinoma</tissue>
    </source>
</reference>
<reference key="15">
    <citation type="journal article" date="2008" name="Mol. Cell">
        <title>Kinase-selective enrichment enables quantitative phosphoproteomics of the kinome across the cell cycle.</title>
        <authorList>
            <person name="Daub H."/>
            <person name="Olsen J.V."/>
            <person name="Bairlein M."/>
            <person name="Gnad F."/>
            <person name="Oppermann F.S."/>
            <person name="Korner R."/>
            <person name="Greff Z."/>
            <person name="Keri G."/>
            <person name="Stemmann O."/>
            <person name="Mann M."/>
        </authorList>
    </citation>
    <scope>PHOSPHORYLATION [LARGE SCALE ANALYSIS] AT SER-2105</scope>
    <scope>IDENTIFICATION BY MASS SPECTROMETRY [LARGE SCALE ANALYSIS]</scope>
    <source>
        <tissue>Cervix carcinoma</tissue>
    </source>
</reference>
<reference key="16">
    <citation type="journal article" date="2008" name="Proc. Natl. Acad. Sci. U.S.A.">
        <title>A quantitative atlas of mitotic phosphorylation.</title>
        <authorList>
            <person name="Dephoure N."/>
            <person name="Zhou C."/>
            <person name="Villen J."/>
            <person name="Beausoleil S.A."/>
            <person name="Bakalarski C.E."/>
            <person name="Elledge S.J."/>
            <person name="Gygi S.P."/>
        </authorList>
    </citation>
    <scope>PHOSPHORYLATION [LARGE SCALE ANALYSIS] AT SER-187; SER-191; SER-779; SER-878; SER-2013; SER-2143 AND THR-2673</scope>
    <scope>IDENTIFICATION BY MASS SPECTROMETRY [LARGE SCALE ANALYSIS]</scope>
    <source>
        <tissue>Cervix carcinoma</tissue>
    </source>
</reference>
<reference key="17">
    <citation type="journal article" date="2009" name="Anal. Chem.">
        <title>Lys-N and trypsin cover complementary parts of the phosphoproteome in a refined SCX-based approach.</title>
        <authorList>
            <person name="Gauci S."/>
            <person name="Helbig A.O."/>
            <person name="Slijper M."/>
            <person name="Krijgsveld J."/>
            <person name="Heck A.J."/>
            <person name="Mohammed S."/>
        </authorList>
    </citation>
    <scope>IDENTIFICATION BY MASS SPECTROMETRY [LARGE SCALE ANALYSIS]</scope>
</reference>
<reference key="18">
    <citation type="journal article" date="2009" name="Sci. Signal.">
        <title>Quantitative phosphoproteomic analysis of T cell receptor signaling reveals system-wide modulation of protein-protein interactions.</title>
        <authorList>
            <person name="Mayya V."/>
            <person name="Lundgren D.H."/>
            <person name="Hwang S.-I."/>
            <person name="Rezaul K."/>
            <person name="Wu L."/>
            <person name="Eng J.K."/>
            <person name="Rodionov V."/>
            <person name="Han D.K."/>
        </authorList>
    </citation>
    <scope>PHOSPHORYLATION [LARGE SCALE ANALYSIS] AT SER-187 AND SER-878</scope>
    <scope>IDENTIFICATION BY MASS SPECTROMETRY [LARGE SCALE ANALYSIS]</scope>
    <source>
        <tissue>Leukemic T-cell</tissue>
    </source>
</reference>
<reference key="19">
    <citation type="journal article" date="2009" name="Science">
        <title>Lysine acetylation targets protein complexes and co-regulates major cellular functions.</title>
        <authorList>
            <person name="Choudhary C."/>
            <person name="Kumar C."/>
            <person name="Gnad F."/>
            <person name="Nielsen M.L."/>
            <person name="Rehman M."/>
            <person name="Walther T.C."/>
            <person name="Olsen J.V."/>
            <person name="Mann M."/>
        </authorList>
    </citation>
    <scope>ACETYLATION [LARGE SCALE ANALYSIS] AT LYS-27 AND LYS-392</scope>
    <scope>IDENTIFICATION BY MASS SPECTROMETRY [LARGE SCALE ANALYSIS]</scope>
</reference>
<reference key="20">
    <citation type="journal article" date="2010" name="Sci. Signal.">
        <title>Quantitative phosphoproteomics reveals widespread full phosphorylation site occupancy during mitosis.</title>
        <authorList>
            <person name="Olsen J.V."/>
            <person name="Vermeulen M."/>
            <person name="Santamaria A."/>
            <person name="Kumar C."/>
            <person name="Miller M.L."/>
            <person name="Jensen L.J."/>
            <person name="Gnad F."/>
            <person name="Cox J."/>
            <person name="Jensen T.S."/>
            <person name="Nigg E.A."/>
            <person name="Brunak S."/>
            <person name="Mann M."/>
        </authorList>
    </citation>
    <scope>PHOSPHORYLATION [LARGE SCALE ANALYSIS] AT SER-779; SER-801; THR-1965; SER-2013; SER-2105 AND THR-2673</scope>
    <scope>IDENTIFICATION BY MASS SPECTROMETRY [LARGE SCALE ANALYSIS]</scope>
    <source>
        <tissue>Cervix carcinoma</tissue>
    </source>
</reference>
<reference key="21">
    <citation type="journal article" date="2011" name="Sci. Signal.">
        <title>System-wide temporal characterization of the proteome and phosphoproteome of human embryonic stem cell differentiation.</title>
        <authorList>
            <person name="Rigbolt K.T."/>
            <person name="Prokhorova T.A."/>
            <person name="Akimov V."/>
            <person name="Henningsen J."/>
            <person name="Johansen P.T."/>
            <person name="Kratchmarova I."/>
            <person name="Kassem M."/>
            <person name="Mann M."/>
            <person name="Olsen J.V."/>
            <person name="Blagoev B."/>
        </authorList>
    </citation>
    <scope>PHOSPHORYLATION [LARGE SCALE ANALYSIS] AT SER-1246; SER-1248; SER-1263; THR-1265; THR-1267; SER-2013; SER-2105 AND SER-2694</scope>
    <scope>IDENTIFICATION BY MASS SPECTROMETRY [LARGE SCALE ANALYSIS]</scope>
</reference>
<reference key="22">
    <citation type="journal article" date="2013" name="J. Proteome Res.">
        <title>Toward a comprehensive characterization of a human cancer cell phosphoproteome.</title>
        <authorList>
            <person name="Zhou H."/>
            <person name="Di Palma S."/>
            <person name="Preisinger C."/>
            <person name="Peng M."/>
            <person name="Polat A.N."/>
            <person name="Heck A.J."/>
            <person name="Mohammed S."/>
        </authorList>
    </citation>
    <scope>PHOSPHORYLATION [LARGE SCALE ANALYSIS] AT SER-187; SER-395; SER-500; SER-779; SER-785; SER-867; SER-878; SER-920; SER-1242; SER-1246; SER-1248; SER-1249; SER-1263; THR-1265; THR-1267; SER-1544; THR-1965; SER-2105; SER-2143; SER-2260 AND THR-2673</scope>
    <scope>IDENTIFICATION BY MASS SPECTROMETRY [LARGE SCALE ANALYSIS]</scope>
    <source>
        <tissue>Cervix carcinoma</tissue>
        <tissue>Erythroleukemia</tissue>
    </source>
</reference>
<reference key="23">
    <citation type="journal article" date="2014" name="J. Proteomics">
        <title>An enzyme assisted RP-RPLC approach for in-depth analysis of human liver phosphoproteome.</title>
        <authorList>
            <person name="Bian Y."/>
            <person name="Song C."/>
            <person name="Cheng K."/>
            <person name="Dong M."/>
            <person name="Wang F."/>
            <person name="Huang J."/>
            <person name="Sun D."/>
            <person name="Wang L."/>
            <person name="Ye M."/>
            <person name="Zou H."/>
        </authorList>
    </citation>
    <scope>PHOSPHORYLATION [LARGE SCALE ANALYSIS] AT SER-335 AND THR-1267</scope>
    <scope>IDENTIFICATION BY MASS SPECTROMETRY [LARGE SCALE ANALYSIS]</scope>
    <source>
        <tissue>Liver</tissue>
    </source>
</reference>
<reference key="24">
    <citation type="journal article" date="2014" name="Mol. Cell. Proteomics">
        <title>Immunoaffinity enrichment and mass spectrometry analysis of protein methylation.</title>
        <authorList>
            <person name="Guo A."/>
            <person name="Gu H."/>
            <person name="Zhou J."/>
            <person name="Mulhern D."/>
            <person name="Wang Y."/>
            <person name="Lee K.A."/>
            <person name="Yang V."/>
            <person name="Aguiar M."/>
            <person name="Kornhauser J."/>
            <person name="Jia X."/>
            <person name="Ren J."/>
            <person name="Beausoleil S.A."/>
            <person name="Silva J.C."/>
            <person name="Vemulapalli V."/>
            <person name="Bedford M.T."/>
            <person name="Comb M.J."/>
        </authorList>
    </citation>
    <scope>METHYLATION [LARGE SCALE ANALYSIS] AT ARG-242; ARG-255; ARG-266; ARG-279 AND ARG-281</scope>
    <scope>IDENTIFICATION BY MASS SPECTROMETRY [LARGE SCALE ANALYSIS]</scope>
    <source>
        <tissue>Colon carcinoma</tissue>
    </source>
</reference>
<reference key="25">
    <citation type="journal article" date="2014" name="Nat. Struct. Mol. Biol.">
        <title>Uncovering global SUMOylation signaling networks in a site-specific manner.</title>
        <authorList>
            <person name="Hendriks I.A."/>
            <person name="D'Souza R.C."/>
            <person name="Yang B."/>
            <person name="Verlaan-de Vries M."/>
            <person name="Mann M."/>
            <person name="Vertegaal A.C."/>
        </authorList>
    </citation>
    <scope>SUMOYLATION [LARGE SCALE ANALYSIS] AT LYS-1133</scope>
    <scope>IDENTIFICATION BY MASS SPECTROMETRY [LARGE SCALE ANALYSIS]</scope>
</reference>
<reference key="26">
    <citation type="journal article" date="2017" name="Nat. Struct. Mol. Biol.">
        <title>Site-specific mapping of the human SUMO proteome reveals co-modification with phosphorylation.</title>
        <authorList>
            <person name="Hendriks I.A."/>
            <person name="Lyon D."/>
            <person name="Young C."/>
            <person name="Jensen L.J."/>
            <person name="Vertegaal A.C."/>
            <person name="Nielsen M.L."/>
        </authorList>
    </citation>
    <scope>SUMOYLATION [LARGE SCALE ANALYSIS] AT LYS-1133</scope>
    <scope>IDENTIFICATION BY MASS SPECTROMETRY [LARGE SCALE ANALYSIS]</scope>
</reference>
<reference key="27">
    <citation type="journal article" date="2018" name="Mol. Cell">
        <title>High-Density Proximity Mapping Reveals the Subcellular Organization of mRNA-Associated Granules and Bodies.</title>
        <authorList>
            <person name="Youn J.Y."/>
            <person name="Dunham W.H."/>
            <person name="Hong S.J."/>
            <person name="Knight J.D.R."/>
            <person name="Bashkurov M."/>
            <person name="Chen G.I."/>
            <person name="Bagci H."/>
            <person name="Rathod B."/>
            <person name="MacLeod G."/>
            <person name="Eng S.W.M."/>
            <person name="Angers S."/>
            <person name="Morris Q."/>
            <person name="Fabian M."/>
            <person name="Cote J.F."/>
            <person name="Gingras A.C."/>
        </authorList>
    </citation>
    <scope>FUNCTION</scope>
    <scope>SUBCELLULAR LOCATION</scope>
</reference>
<reference key="28">
    <citation type="journal article" date="2011" name="BMC Syst. Biol.">
        <title>Initial characterization of the human central proteome.</title>
        <authorList>
            <person name="Burkard T.R."/>
            <person name="Planyavsky M."/>
            <person name="Kaupe I."/>
            <person name="Breitwieser F.P."/>
            <person name="Buerckstuemmer T."/>
            <person name="Bennett K.L."/>
            <person name="Superti-Furga G."/>
            <person name="Colinge J."/>
        </authorList>
    </citation>
    <scope>VARIANT [LARGE SCALE ANALYSIS] THR-906</scope>
    <scope>IDENTIFICATION BY MASS SPECTROMETRY [LARGE SCALE ANALYSIS]</scope>
</reference>
<proteinExistence type="evidence at protein level"/>
<evidence type="ECO:0000250" key="1">
    <source>
        <dbReference type="UniProtKB" id="Q3TLH4"/>
    </source>
</evidence>
<evidence type="ECO:0000255" key="2"/>
<evidence type="ECO:0000256" key="3">
    <source>
        <dbReference type="SAM" id="MobiDB-lite"/>
    </source>
</evidence>
<evidence type="ECO:0000269" key="4">
    <source>
    </source>
</evidence>
<evidence type="ECO:0000269" key="5">
    <source>
    </source>
</evidence>
<evidence type="ECO:0000269" key="6">
    <source>
    </source>
</evidence>
<evidence type="ECO:0000303" key="7">
    <source>
    </source>
</evidence>
<evidence type="ECO:0000303" key="8">
    <source>
    </source>
</evidence>
<evidence type="ECO:0000303" key="9">
    <source>
    </source>
</evidence>
<evidence type="ECO:0000303" key="10">
    <source>
    </source>
</evidence>
<evidence type="ECO:0000303" key="11">
    <source ref="1"/>
</evidence>
<evidence type="ECO:0000303" key="12">
    <source ref="2"/>
</evidence>
<evidence type="ECO:0000303" key="13">
    <source ref="4"/>
</evidence>
<evidence type="ECO:0000305" key="14"/>
<evidence type="ECO:0000305" key="15">
    <source>
    </source>
</evidence>
<evidence type="ECO:0000312" key="16">
    <source>
        <dbReference type="HGNC" id="HGNC:24903"/>
    </source>
</evidence>
<evidence type="ECO:0007744" key="17">
    <source>
    </source>
</evidence>
<evidence type="ECO:0007744" key="18">
    <source>
    </source>
</evidence>
<evidence type="ECO:0007744" key="19">
    <source>
    </source>
</evidence>
<evidence type="ECO:0007744" key="20">
    <source>
    </source>
</evidence>
<evidence type="ECO:0007744" key="21">
    <source>
    </source>
</evidence>
<evidence type="ECO:0007744" key="22">
    <source>
    </source>
</evidence>
<evidence type="ECO:0007744" key="23">
    <source>
    </source>
</evidence>
<evidence type="ECO:0007744" key="24">
    <source>
    </source>
</evidence>
<evidence type="ECO:0007744" key="25">
    <source>
    </source>
</evidence>
<evidence type="ECO:0007744" key="26">
    <source>
    </source>
</evidence>
<evidence type="ECO:0007744" key="27">
    <source>
    </source>
</evidence>
<evidence type="ECO:0007744" key="28">
    <source>
    </source>
</evidence>
<evidence type="ECO:0007744" key="29">
    <source>
    </source>
</evidence>
<evidence type="ECO:0007744" key="30">
    <source>
    </source>
</evidence>
<evidence type="ECO:0007744" key="31">
    <source>
    </source>
</evidence>
<keyword id="KW-0007">Acetylation</keyword>
<keyword id="KW-0025">Alternative splicing</keyword>
<keyword id="KW-0175">Coiled coil</keyword>
<keyword id="KW-0963">Cytoplasm</keyword>
<keyword id="KW-0903">Direct protein sequencing</keyword>
<keyword id="KW-1017">Isopeptide bond</keyword>
<keyword id="KW-0488">Methylation</keyword>
<keyword id="KW-0597">Phosphoprotein</keyword>
<keyword id="KW-1267">Proteomics identification</keyword>
<keyword id="KW-1185">Reference proteome</keyword>
<keyword id="KW-0832">Ubl conjugation</keyword>
<comment type="function">
    <text evidence="6">Required for efficient formation of stress granules.</text>
</comment>
<comment type="subcellular location">
    <subcellularLocation>
        <location evidence="15">Cytoplasm</location>
        <location evidence="15">Stress granule</location>
    </subcellularLocation>
</comment>
<comment type="alternative products">
    <event type="alternative splicing"/>
    <isoform>
        <id>Q9Y520-1</id>
        <name>1</name>
        <sequence type="displayed"/>
    </isoform>
    <isoform>
        <id>Q9Y520-2</id>
        <name>2</name>
        <sequence type="described" ref="VSP_035244"/>
    </isoform>
    <isoform>
        <id>Q9Y520-3</id>
        <name>3</name>
        <sequence type="described" ref="VSP_035247 VSP_035248"/>
    </isoform>
    <isoform>
        <id>Q9Y520-4</id>
        <name>4</name>
        <sequence type="described" ref="VSP_035249"/>
    </isoform>
    <isoform>
        <id>Q9Y520-5</id>
        <name>5</name>
        <sequence type="described" ref="VSP_035245"/>
    </isoform>
    <isoform>
        <id>Q9Y520-6</id>
        <name>6</name>
        <sequence type="described" ref="VSP_035246 VSP_035249"/>
    </isoform>
    <isoform>
        <id>Q9Y520-7</id>
        <name>7</name>
        <sequence type="described" ref="VSP_035250"/>
    </isoform>
</comment>
<comment type="tissue specificity">
    <text evidence="5">Overexpressed in bladder cancer.</text>
</comment>
<comment type="sequence caution" evidence="14">
    <conflict type="miscellaneous discrepancy">
        <sequence resource="EMBL-CDS" id="AAH06090"/>
    </conflict>
    <text>Contaminating sequence. Potential poly-A sequence.</text>
</comment>
<comment type="sequence caution" evidence="14">
    <conflict type="miscellaneous discrepancy">
        <sequence resource="EMBL-CDS" id="AAH45713"/>
    </conflict>
    <text>Contaminating sequence. Potential poly-A sequence.</text>
</comment>
<comment type="sequence caution" evidence="14">
    <conflict type="miscellaneous discrepancy">
        <sequence resource="EMBL-CDS" id="AAH58930"/>
    </conflict>
    <text>Contaminating sequence. Potential poly-A sequence.</text>
</comment>
<comment type="sequence caution" evidence="14">
    <conflict type="miscellaneous discrepancy">
        <sequence resource="EMBL-CDS" id="BAA90997"/>
    </conflict>
    <text>Contaminating sequence. Potential poly-A sequence.</text>
</comment>